<gene>
    <name type="primary">DUSP18</name>
    <name type="synonym">LMWDSP20</name>
</gene>
<protein>
    <recommendedName>
        <fullName>Dual specificity protein phosphatase 18</fullName>
        <ecNumber evidence="4 5">3.1.3.16</ecNumber>
        <ecNumber evidence="4 5">3.1.3.48</ecNumber>
    </recommendedName>
    <alternativeName>
        <fullName evidence="6">Low molecular weight dual specificity phosphatase 20</fullName>
        <shortName>LMW-DSP20</shortName>
    </alternativeName>
</protein>
<feature type="chain" id="PRO_0000094828" description="Dual specificity protein phosphatase 18">
    <location>
        <begin position="1"/>
        <end position="188"/>
    </location>
</feature>
<feature type="domain" description="Tyrosine-protein phosphatase" evidence="2">
    <location>
        <begin position="19"/>
        <end position="160"/>
    </location>
</feature>
<feature type="active site" description="Phosphocysteine intermediate" evidence="2">
    <location>
        <position position="104"/>
    </location>
</feature>
<feature type="mutagenesis site" description="Abolishes most of in vitro phosphatase activity." evidence="5">
    <original>D</original>
    <variation>A</variation>
    <location>
        <position position="73"/>
    </location>
</feature>
<feature type="mutagenesis site" description="No effect on in vitro phosphatase activity." evidence="5">
    <original>L</original>
    <variation>V</variation>
    <location>
        <position position="102"/>
    </location>
</feature>
<feature type="mutagenesis site" description="Abolishes most of in vitro phosphatase activity." evidence="5">
    <original>C</original>
    <variation>S</variation>
    <location>
        <position position="104"/>
    </location>
</feature>
<feature type="mutagenesis site" description="Abolishes most of in vitro phosphatase activity." evidence="5">
    <original>R</original>
    <variation>K</variation>
    <location>
        <position position="110"/>
    </location>
</feature>
<feature type="mutagenesis site" description="Abolishes most of in vitro phosphatase activity." evidence="5">
    <original>S</original>
    <variation>A</variation>
    <location>
        <position position="111"/>
    </location>
</feature>
<feature type="sequence conflict" description="In Ref. 2; AAN77931." evidence="7" ref="2">
    <original>T</original>
    <variation>A</variation>
    <location>
        <position position="2"/>
    </location>
</feature>
<feature type="strand" evidence="8">
    <location>
        <begin position="21"/>
        <end position="24"/>
    </location>
</feature>
<feature type="strand" evidence="8">
    <location>
        <begin position="27"/>
        <end position="30"/>
    </location>
</feature>
<feature type="helix" evidence="8">
    <location>
        <begin position="34"/>
        <end position="36"/>
    </location>
</feature>
<feature type="helix" evidence="8">
    <location>
        <begin position="38"/>
        <end position="43"/>
    </location>
</feature>
<feature type="strand" evidence="8">
    <location>
        <begin position="48"/>
        <end position="51"/>
    </location>
</feature>
<feature type="strand" evidence="8">
    <location>
        <begin position="65"/>
        <end position="68"/>
    </location>
</feature>
<feature type="helix" evidence="8">
    <location>
        <begin position="79"/>
        <end position="82"/>
    </location>
</feature>
<feature type="helix" evidence="8">
    <location>
        <begin position="83"/>
        <end position="95"/>
    </location>
</feature>
<feature type="strand" evidence="8">
    <location>
        <begin position="100"/>
        <end position="103"/>
    </location>
</feature>
<feature type="strand" evidence="8">
    <location>
        <begin position="105"/>
        <end position="109"/>
    </location>
</feature>
<feature type="helix" evidence="8">
    <location>
        <begin position="110"/>
        <end position="122"/>
    </location>
</feature>
<feature type="helix" evidence="8">
    <location>
        <begin position="127"/>
        <end position="137"/>
    </location>
</feature>
<feature type="helix" evidence="8">
    <location>
        <begin position="145"/>
        <end position="159"/>
    </location>
</feature>
<feature type="helix" evidence="8">
    <location>
        <begin position="176"/>
        <end position="178"/>
    </location>
</feature>
<evidence type="ECO:0000250" key="1">
    <source>
        <dbReference type="UniProtKB" id="Q8VE01"/>
    </source>
</evidence>
<evidence type="ECO:0000255" key="2">
    <source>
        <dbReference type="PROSITE-ProRule" id="PRU00160"/>
    </source>
</evidence>
<evidence type="ECO:0000255" key="3">
    <source>
        <dbReference type="PROSITE-ProRule" id="PRU10044"/>
    </source>
</evidence>
<evidence type="ECO:0000269" key="4">
    <source>
    </source>
</evidence>
<evidence type="ECO:0000269" key="5">
    <source>
    </source>
</evidence>
<evidence type="ECO:0000303" key="6">
    <source>
    </source>
</evidence>
<evidence type="ECO:0000305" key="7"/>
<evidence type="ECO:0007829" key="8">
    <source>
        <dbReference type="PDB" id="2ESB"/>
    </source>
</evidence>
<proteinExistence type="evidence at protein level"/>
<reference key="1">
    <citation type="journal article" date="2002" name="Biochem. Biophys. Res. Commun.">
        <title>Identification and characterization of two novel low-molecular-weight dual specificity phosphatases.</title>
        <authorList>
            <person name="Hood K.L."/>
            <person name="Tobin J.F."/>
            <person name="Yoon C."/>
        </authorList>
    </citation>
    <scope>NUCLEOTIDE SEQUENCE [MRNA]</scope>
    <scope>CHARACTERIZATION</scope>
    <scope>SUBCELLULAR LOCATION</scope>
    <scope>TISSUE SPECIFICITY</scope>
    <scope>CATALYTIC ACTIVITY</scope>
    <scope>FUNCTION</scope>
    <source>
        <tissue>Colon tumor</tissue>
    </source>
</reference>
<reference key="2">
    <citation type="journal article" date="2003" name="Biochim. Biophys. Acta">
        <title>Molecular cloning and characterization of a novel dual-specificity phosphatase18 gene from human fetal brain.</title>
        <authorList>
            <person name="Wu Q."/>
            <person name="Gu S."/>
            <person name="Dai J."/>
            <person name="Dai J."/>
            <person name="Wang L."/>
            <person name="Li Y."/>
            <person name="Zeng L."/>
            <person name="Xu J."/>
            <person name="Ye X."/>
            <person name="Zhao W."/>
            <person name="Ji C."/>
            <person name="Xie Y."/>
            <person name="Mao Y."/>
        </authorList>
    </citation>
    <scope>NUCLEOTIDE SEQUENCE [MRNA]</scope>
    <scope>CATALYTIC ACTIVITY</scope>
    <scope>BIOPHYSICOCHEMICAL PROPERTIES</scope>
    <scope>FUNCTION</scope>
    <scope>ACTIVITY REGULATION</scope>
    <scope>TISSUE SPECIFICITY</scope>
    <scope>MUTAGENESIS OF ASP-73; LEU-102; CYS-104; ARG-110 AND SER-111</scope>
    <source>
        <tissue>Fetal brain</tissue>
    </source>
</reference>
<reference key="3">
    <citation type="journal article" date="2004" name="Genome Biol.">
        <title>A genome annotation-driven approach to cloning the human ORFeome.</title>
        <authorList>
            <person name="Collins J.E."/>
            <person name="Wright C.L."/>
            <person name="Edwards C.A."/>
            <person name="Davis M.P."/>
            <person name="Grinham J.A."/>
            <person name="Cole C.G."/>
            <person name="Goward M.E."/>
            <person name="Aguado B."/>
            <person name="Mallya M."/>
            <person name="Mokrab Y."/>
            <person name="Huckle E.J."/>
            <person name="Beare D.M."/>
            <person name="Dunham I."/>
        </authorList>
    </citation>
    <scope>NUCLEOTIDE SEQUENCE [LARGE SCALE MRNA]</scope>
</reference>
<reference key="4">
    <citation type="journal article" date="2004" name="Nat. Genet.">
        <title>Complete sequencing and characterization of 21,243 full-length human cDNAs.</title>
        <authorList>
            <person name="Ota T."/>
            <person name="Suzuki Y."/>
            <person name="Nishikawa T."/>
            <person name="Otsuki T."/>
            <person name="Sugiyama T."/>
            <person name="Irie R."/>
            <person name="Wakamatsu A."/>
            <person name="Hayashi K."/>
            <person name="Sato H."/>
            <person name="Nagai K."/>
            <person name="Kimura K."/>
            <person name="Makita H."/>
            <person name="Sekine M."/>
            <person name="Obayashi M."/>
            <person name="Nishi T."/>
            <person name="Shibahara T."/>
            <person name="Tanaka T."/>
            <person name="Ishii S."/>
            <person name="Yamamoto J."/>
            <person name="Saito K."/>
            <person name="Kawai Y."/>
            <person name="Isono Y."/>
            <person name="Nakamura Y."/>
            <person name="Nagahari K."/>
            <person name="Murakami K."/>
            <person name="Yasuda T."/>
            <person name="Iwayanagi T."/>
            <person name="Wagatsuma M."/>
            <person name="Shiratori A."/>
            <person name="Sudo H."/>
            <person name="Hosoiri T."/>
            <person name="Kaku Y."/>
            <person name="Kodaira H."/>
            <person name="Kondo H."/>
            <person name="Sugawara M."/>
            <person name="Takahashi M."/>
            <person name="Kanda K."/>
            <person name="Yokoi T."/>
            <person name="Furuya T."/>
            <person name="Kikkawa E."/>
            <person name="Omura Y."/>
            <person name="Abe K."/>
            <person name="Kamihara K."/>
            <person name="Katsuta N."/>
            <person name="Sato K."/>
            <person name="Tanikawa M."/>
            <person name="Yamazaki M."/>
            <person name="Ninomiya K."/>
            <person name="Ishibashi T."/>
            <person name="Yamashita H."/>
            <person name="Murakawa K."/>
            <person name="Fujimori K."/>
            <person name="Tanai H."/>
            <person name="Kimata M."/>
            <person name="Watanabe M."/>
            <person name="Hiraoka S."/>
            <person name="Chiba Y."/>
            <person name="Ishida S."/>
            <person name="Ono Y."/>
            <person name="Takiguchi S."/>
            <person name="Watanabe S."/>
            <person name="Yosida M."/>
            <person name="Hotuta T."/>
            <person name="Kusano J."/>
            <person name="Kanehori K."/>
            <person name="Takahashi-Fujii A."/>
            <person name="Hara H."/>
            <person name="Tanase T.-O."/>
            <person name="Nomura Y."/>
            <person name="Togiya S."/>
            <person name="Komai F."/>
            <person name="Hara R."/>
            <person name="Takeuchi K."/>
            <person name="Arita M."/>
            <person name="Imose N."/>
            <person name="Musashino K."/>
            <person name="Yuuki H."/>
            <person name="Oshima A."/>
            <person name="Sasaki N."/>
            <person name="Aotsuka S."/>
            <person name="Yoshikawa Y."/>
            <person name="Matsunawa H."/>
            <person name="Ichihara T."/>
            <person name="Shiohata N."/>
            <person name="Sano S."/>
            <person name="Moriya S."/>
            <person name="Momiyama H."/>
            <person name="Satoh N."/>
            <person name="Takami S."/>
            <person name="Terashima Y."/>
            <person name="Suzuki O."/>
            <person name="Nakagawa S."/>
            <person name="Senoh A."/>
            <person name="Mizoguchi H."/>
            <person name="Goto Y."/>
            <person name="Shimizu F."/>
            <person name="Wakebe H."/>
            <person name="Hishigaki H."/>
            <person name="Watanabe T."/>
            <person name="Sugiyama A."/>
            <person name="Takemoto M."/>
            <person name="Kawakami B."/>
            <person name="Yamazaki M."/>
            <person name="Watanabe K."/>
            <person name="Kumagai A."/>
            <person name="Itakura S."/>
            <person name="Fukuzumi Y."/>
            <person name="Fujimori Y."/>
            <person name="Komiyama M."/>
            <person name="Tashiro H."/>
            <person name="Tanigami A."/>
            <person name="Fujiwara T."/>
            <person name="Ono T."/>
            <person name="Yamada K."/>
            <person name="Fujii Y."/>
            <person name="Ozaki K."/>
            <person name="Hirao M."/>
            <person name="Ohmori Y."/>
            <person name="Kawabata A."/>
            <person name="Hikiji T."/>
            <person name="Kobatake N."/>
            <person name="Inagaki H."/>
            <person name="Ikema Y."/>
            <person name="Okamoto S."/>
            <person name="Okitani R."/>
            <person name="Kawakami T."/>
            <person name="Noguchi S."/>
            <person name="Itoh T."/>
            <person name="Shigeta K."/>
            <person name="Senba T."/>
            <person name="Matsumura K."/>
            <person name="Nakajima Y."/>
            <person name="Mizuno T."/>
            <person name="Morinaga M."/>
            <person name="Sasaki M."/>
            <person name="Togashi T."/>
            <person name="Oyama M."/>
            <person name="Hata H."/>
            <person name="Watanabe M."/>
            <person name="Komatsu T."/>
            <person name="Mizushima-Sugano J."/>
            <person name="Satoh T."/>
            <person name="Shirai Y."/>
            <person name="Takahashi Y."/>
            <person name="Nakagawa K."/>
            <person name="Okumura K."/>
            <person name="Nagase T."/>
            <person name="Nomura N."/>
            <person name="Kikuchi H."/>
            <person name="Masuho Y."/>
            <person name="Yamashita R."/>
            <person name="Nakai K."/>
            <person name="Yada T."/>
            <person name="Nakamura Y."/>
            <person name="Ohara O."/>
            <person name="Isogai T."/>
            <person name="Sugano S."/>
        </authorList>
    </citation>
    <scope>NUCLEOTIDE SEQUENCE [LARGE SCALE MRNA]</scope>
</reference>
<reference key="5">
    <citation type="submission" date="2005-07" db="EMBL/GenBank/DDBJ databases">
        <authorList>
            <person name="Mural R.J."/>
            <person name="Istrail S."/>
            <person name="Sutton G.G."/>
            <person name="Florea L."/>
            <person name="Halpern A.L."/>
            <person name="Mobarry C.M."/>
            <person name="Lippert R."/>
            <person name="Walenz B."/>
            <person name="Shatkay H."/>
            <person name="Dew I."/>
            <person name="Miller J.R."/>
            <person name="Flanigan M.J."/>
            <person name="Edwards N.J."/>
            <person name="Bolanos R."/>
            <person name="Fasulo D."/>
            <person name="Halldorsson B.V."/>
            <person name="Hannenhalli S."/>
            <person name="Turner R."/>
            <person name="Yooseph S."/>
            <person name="Lu F."/>
            <person name="Nusskern D.R."/>
            <person name="Shue B.C."/>
            <person name="Zheng X.H."/>
            <person name="Zhong F."/>
            <person name="Delcher A.L."/>
            <person name="Huson D.H."/>
            <person name="Kravitz S.A."/>
            <person name="Mouchard L."/>
            <person name="Reinert K."/>
            <person name="Remington K.A."/>
            <person name="Clark A.G."/>
            <person name="Waterman M.S."/>
            <person name="Eichler E.E."/>
            <person name="Adams M.D."/>
            <person name="Hunkapiller M.W."/>
            <person name="Myers E.W."/>
            <person name="Venter J.C."/>
        </authorList>
    </citation>
    <scope>NUCLEOTIDE SEQUENCE [LARGE SCALE GENOMIC DNA]</scope>
</reference>
<reference key="6">
    <citation type="journal article" date="2004" name="Genome Res.">
        <title>The status, quality, and expansion of the NIH full-length cDNA project: the Mammalian Gene Collection (MGC).</title>
        <authorList>
            <consortium name="The MGC Project Team"/>
        </authorList>
    </citation>
    <scope>NUCLEOTIDE SEQUENCE [LARGE SCALE MRNA]</scope>
    <source>
        <tissue>Placenta</tissue>
    </source>
</reference>
<reference key="7">
    <citation type="journal article" date="2006" name="Acta Crystallogr. D">
        <title>Structure of human DSP18, a member of the dual-specificity protein tyrosine phosphatase family.</title>
        <authorList>
            <person name="Jeong D.G."/>
            <person name="Cho Y.H."/>
            <person name="Yoon T.S."/>
            <person name="Kim J.H."/>
            <person name="Son J.H."/>
            <person name="Ryu S.E."/>
            <person name="Kim S.J."/>
        </authorList>
    </citation>
    <scope>X-RAY CRYSTALLOGRAPHY (2.0 ANGSTROMS)</scope>
</reference>
<name>DUS18_HUMAN</name>
<keyword id="KW-0002">3D-structure</keyword>
<keyword id="KW-0963">Cytoplasm</keyword>
<keyword id="KW-0378">Hydrolase</keyword>
<keyword id="KW-0472">Membrane</keyword>
<keyword id="KW-0496">Mitochondrion</keyword>
<keyword id="KW-0999">Mitochondrion inner membrane</keyword>
<keyword id="KW-0539">Nucleus</keyword>
<keyword id="KW-0904">Protein phosphatase</keyword>
<keyword id="KW-1267">Proteomics identification</keyword>
<keyword id="KW-1185">Reference proteome</keyword>
<dbReference type="EC" id="3.1.3.16" evidence="4 5"/>
<dbReference type="EC" id="3.1.3.48" evidence="4 5"/>
<dbReference type="EMBL" id="AF533017">
    <property type="protein sequence ID" value="AAN59787.1"/>
    <property type="molecule type" value="mRNA"/>
</dbReference>
<dbReference type="EMBL" id="AF461689">
    <property type="protein sequence ID" value="AAN77931.1"/>
    <property type="molecule type" value="mRNA"/>
</dbReference>
<dbReference type="EMBL" id="CR456406">
    <property type="protein sequence ID" value="CAG30292.1"/>
    <property type="molecule type" value="mRNA"/>
</dbReference>
<dbReference type="EMBL" id="AK056074">
    <property type="protein sequence ID" value="BAG51616.1"/>
    <property type="molecule type" value="mRNA"/>
</dbReference>
<dbReference type="EMBL" id="CH471095">
    <property type="protein sequence ID" value="EAW59913.1"/>
    <property type="molecule type" value="Genomic_DNA"/>
</dbReference>
<dbReference type="EMBL" id="BC030987">
    <property type="protein sequence ID" value="AAH30987.1"/>
    <property type="molecule type" value="mRNA"/>
</dbReference>
<dbReference type="CCDS" id="CCDS13883.1"/>
<dbReference type="RefSeq" id="NP_001291723.1">
    <property type="nucleotide sequence ID" value="NM_001304794.2"/>
</dbReference>
<dbReference type="RefSeq" id="NP_001291724.1">
    <property type="nucleotide sequence ID" value="NM_001304795.2"/>
</dbReference>
<dbReference type="RefSeq" id="NP_689724.3">
    <property type="nucleotide sequence ID" value="NM_152511.4"/>
</dbReference>
<dbReference type="RefSeq" id="XP_005261425.1">
    <property type="nucleotide sequence ID" value="XM_005261368.6"/>
</dbReference>
<dbReference type="RefSeq" id="XP_006724211.1">
    <property type="nucleotide sequence ID" value="XM_006724148.3"/>
</dbReference>
<dbReference type="RefSeq" id="XP_011528222.1">
    <property type="nucleotide sequence ID" value="XM_011529920.2"/>
</dbReference>
<dbReference type="RefSeq" id="XP_011528223.1">
    <property type="nucleotide sequence ID" value="XM_011529921.4"/>
</dbReference>
<dbReference type="RefSeq" id="XP_016884116.1">
    <property type="nucleotide sequence ID" value="XM_017028627.3"/>
</dbReference>
<dbReference type="RefSeq" id="XP_016884117.1">
    <property type="nucleotide sequence ID" value="XM_017028628.2"/>
</dbReference>
<dbReference type="RefSeq" id="XP_047297114.1">
    <property type="nucleotide sequence ID" value="XM_047441158.1"/>
</dbReference>
<dbReference type="RefSeq" id="XP_047297115.1">
    <property type="nucleotide sequence ID" value="XM_047441159.1"/>
</dbReference>
<dbReference type="RefSeq" id="XP_054181114.1">
    <property type="nucleotide sequence ID" value="XM_054325139.1"/>
</dbReference>
<dbReference type="RefSeq" id="XP_054181115.1">
    <property type="nucleotide sequence ID" value="XM_054325140.1"/>
</dbReference>
<dbReference type="RefSeq" id="XP_054181116.1">
    <property type="nucleotide sequence ID" value="XM_054325141.1"/>
</dbReference>
<dbReference type="RefSeq" id="XP_054181117.1">
    <property type="nucleotide sequence ID" value="XM_054325142.1"/>
</dbReference>
<dbReference type="RefSeq" id="XP_054181118.1">
    <property type="nucleotide sequence ID" value="XM_054325143.1"/>
</dbReference>
<dbReference type="RefSeq" id="XP_054181119.1">
    <property type="nucleotide sequence ID" value="XM_054325144.1"/>
</dbReference>
<dbReference type="PDB" id="2ESB">
    <property type="method" value="X-ray"/>
    <property type="resolution" value="2.00 A"/>
    <property type="chains" value="A=1-188"/>
</dbReference>
<dbReference type="PDBsum" id="2ESB"/>
<dbReference type="SMR" id="Q8NEJ0"/>
<dbReference type="BioGRID" id="127280">
    <property type="interactions" value="23"/>
</dbReference>
<dbReference type="FunCoup" id="Q8NEJ0">
    <property type="interactions" value="1519"/>
</dbReference>
<dbReference type="IntAct" id="Q8NEJ0">
    <property type="interactions" value="21"/>
</dbReference>
<dbReference type="MINT" id="Q8NEJ0"/>
<dbReference type="STRING" id="9606.ENSP00000333917"/>
<dbReference type="DEPOD" id="DUSP18"/>
<dbReference type="GlyGen" id="Q8NEJ0">
    <property type="glycosylation" value="1 site, 1 O-linked glycan (1 site)"/>
</dbReference>
<dbReference type="PhosphoSitePlus" id="Q8NEJ0"/>
<dbReference type="BioMuta" id="DUSP18"/>
<dbReference type="DMDM" id="29840768"/>
<dbReference type="MassIVE" id="Q8NEJ0"/>
<dbReference type="PaxDb" id="9606-ENSP00000333917"/>
<dbReference type="PeptideAtlas" id="Q8NEJ0"/>
<dbReference type="ProteomicsDB" id="73168"/>
<dbReference type="Antibodypedia" id="24819">
    <property type="antibodies" value="37 antibodies from 12 providers"/>
</dbReference>
<dbReference type="DNASU" id="150290"/>
<dbReference type="Ensembl" id="ENST00000334679.4">
    <property type="protein sequence ID" value="ENSP00000333917.3"/>
    <property type="gene ID" value="ENSG00000167065.14"/>
</dbReference>
<dbReference type="Ensembl" id="ENST00000377087.3">
    <property type="protein sequence ID" value="ENSP00000366291.3"/>
    <property type="gene ID" value="ENSG00000167065.14"/>
</dbReference>
<dbReference type="Ensembl" id="ENST00000404885.5">
    <property type="protein sequence ID" value="ENSP00000385463.1"/>
    <property type="gene ID" value="ENSG00000167065.14"/>
</dbReference>
<dbReference type="Ensembl" id="ENST00000407308.1">
    <property type="protein sequence ID" value="ENSP00000386063.1"/>
    <property type="gene ID" value="ENSG00000167065.14"/>
</dbReference>
<dbReference type="GeneID" id="150290"/>
<dbReference type="KEGG" id="hsa:150290"/>
<dbReference type="MANE-Select" id="ENST00000334679.4">
    <property type="protein sequence ID" value="ENSP00000333917.3"/>
    <property type="RefSeq nucleotide sequence ID" value="NM_152511.5"/>
    <property type="RefSeq protein sequence ID" value="NP_689724.3"/>
</dbReference>
<dbReference type="UCSC" id="uc003aiu.4">
    <property type="organism name" value="human"/>
</dbReference>
<dbReference type="AGR" id="HGNC:18484"/>
<dbReference type="CTD" id="150290"/>
<dbReference type="DisGeNET" id="150290"/>
<dbReference type="GeneCards" id="DUSP18"/>
<dbReference type="HGNC" id="HGNC:18484">
    <property type="gene designation" value="DUSP18"/>
</dbReference>
<dbReference type="HPA" id="ENSG00000167065">
    <property type="expression patterns" value="Low tissue specificity"/>
</dbReference>
<dbReference type="MIM" id="611446">
    <property type="type" value="gene"/>
</dbReference>
<dbReference type="neXtProt" id="NX_Q8NEJ0"/>
<dbReference type="OpenTargets" id="ENSG00000167065"/>
<dbReference type="PharmGKB" id="PA134928498"/>
<dbReference type="VEuPathDB" id="HostDB:ENSG00000167065"/>
<dbReference type="eggNOG" id="KOG1718">
    <property type="taxonomic scope" value="Eukaryota"/>
</dbReference>
<dbReference type="GeneTree" id="ENSGT00940000161186"/>
<dbReference type="InParanoid" id="Q8NEJ0"/>
<dbReference type="OMA" id="DECYEFM"/>
<dbReference type="OrthoDB" id="285418at2759"/>
<dbReference type="PAN-GO" id="Q8NEJ0">
    <property type="GO annotations" value="3 GO annotations based on evolutionary models"/>
</dbReference>
<dbReference type="PhylomeDB" id="Q8NEJ0"/>
<dbReference type="TreeFam" id="TF316009"/>
<dbReference type="PathwayCommons" id="Q8NEJ0"/>
<dbReference type="SignaLink" id="Q8NEJ0"/>
<dbReference type="BioGRID-ORCS" id="150290">
    <property type="hits" value="9 hits in 1166 CRISPR screens"/>
</dbReference>
<dbReference type="ChiTaRS" id="DUSP18">
    <property type="organism name" value="human"/>
</dbReference>
<dbReference type="EvolutionaryTrace" id="Q8NEJ0"/>
<dbReference type="GeneWiki" id="DUSP18"/>
<dbReference type="GenomeRNAi" id="150290"/>
<dbReference type="Pharos" id="Q8NEJ0">
    <property type="development level" value="Tbio"/>
</dbReference>
<dbReference type="PRO" id="PR:Q8NEJ0"/>
<dbReference type="Proteomes" id="UP000005640">
    <property type="component" value="Chromosome 22"/>
</dbReference>
<dbReference type="RNAct" id="Q8NEJ0">
    <property type="molecule type" value="protein"/>
</dbReference>
<dbReference type="Bgee" id="ENSG00000167065">
    <property type="expression patterns" value="Expressed in secondary oocyte and 164 other cell types or tissues"/>
</dbReference>
<dbReference type="ExpressionAtlas" id="Q8NEJ0">
    <property type="expression patterns" value="baseline and differential"/>
</dbReference>
<dbReference type="GO" id="GO:0005737">
    <property type="term" value="C:cytoplasm"/>
    <property type="evidence" value="ECO:0000314"/>
    <property type="project" value="UniProtKB"/>
</dbReference>
<dbReference type="GO" id="GO:0005743">
    <property type="term" value="C:mitochondrial inner membrane"/>
    <property type="evidence" value="ECO:0007669"/>
    <property type="project" value="UniProtKB-SubCell"/>
</dbReference>
<dbReference type="GO" id="GO:0005654">
    <property type="term" value="C:nucleoplasm"/>
    <property type="evidence" value="ECO:0000314"/>
    <property type="project" value="HPA"/>
</dbReference>
<dbReference type="GO" id="GO:0005634">
    <property type="term" value="C:nucleus"/>
    <property type="evidence" value="ECO:0000314"/>
    <property type="project" value="UniProtKB"/>
</dbReference>
<dbReference type="GO" id="GO:0017017">
    <property type="term" value="F:MAP kinase tyrosine/serine/threonine phosphatase activity"/>
    <property type="evidence" value="ECO:0007669"/>
    <property type="project" value="InterPro"/>
</dbReference>
<dbReference type="GO" id="GO:0016791">
    <property type="term" value="F:phosphatase activity"/>
    <property type="evidence" value="ECO:0000314"/>
    <property type="project" value="UniProtKB"/>
</dbReference>
<dbReference type="GO" id="GO:0004722">
    <property type="term" value="F:protein serine/threonine phosphatase activity"/>
    <property type="evidence" value="ECO:0007669"/>
    <property type="project" value="UniProtKB-EC"/>
</dbReference>
<dbReference type="GO" id="GO:0004725">
    <property type="term" value="F:protein tyrosine phosphatase activity"/>
    <property type="evidence" value="ECO:0000314"/>
    <property type="project" value="UniProtKB"/>
</dbReference>
<dbReference type="GO" id="GO:0008138">
    <property type="term" value="F:protein tyrosine/serine/threonine phosphatase activity"/>
    <property type="evidence" value="ECO:0000314"/>
    <property type="project" value="UniProtKB"/>
</dbReference>
<dbReference type="GO" id="GO:0016311">
    <property type="term" value="P:dephosphorylation"/>
    <property type="evidence" value="ECO:0000314"/>
    <property type="project" value="UniProtKB"/>
</dbReference>
<dbReference type="GO" id="GO:0035970">
    <property type="term" value="P:peptidyl-threonine dephosphorylation"/>
    <property type="evidence" value="ECO:0000314"/>
    <property type="project" value="UniProtKB"/>
</dbReference>
<dbReference type="GO" id="GO:0035335">
    <property type="term" value="P:peptidyl-tyrosine dephosphorylation"/>
    <property type="evidence" value="ECO:0000314"/>
    <property type="project" value="UniProtKB"/>
</dbReference>
<dbReference type="CDD" id="cd14573">
    <property type="entry name" value="DUSP18_21"/>
    <property type="match status" value="1"/>
</dbReference>
<dbReference type="FunFam" id="3.90.190.10:FF:000049">
    <property type="entry name" value="Dual specificity protein phosphatase 14"/>
    <property type="match status" value="1"/>
</dbReference>
<dbReference type="Gene3D" id="3.90.190.10">
    <property type="entry name" value="Protein tyrosine phosphatase superfamily"/>
    <property type="match status" value="1"/>
</dbReference>
<dbReference type="InterPro" id="IPR020420">
    <property type="entry name" value="Atypical_DUSP_subfamB"/>
</dbReference>
<dbReference type="InterPro" id="IPR000340">
    <property type="entry name" value="Dual-sp_phosphatase_cat-dom"/>
</dbReference>
<dbReference type="InterPro" id="IPR029021">
    <property type="entry name" value="Prot-tyrosine_phosphatase-like"/>
</dbReference>
<dbReference type="InterPro" id="IPR016130">
    <property type="entry name" value="Tyr_Pase_AS"/>
</dbReference>
<dbReference type="InterPro" id="IPR000387">
    <property type="entry name" value="Tyr_Pase_dom"/>
</dbReference>
<dbReference type="InterPro" id="IPR020422">
    <property type="entry name" value="TYR_PHOSPHATASE_DUAL_dom"/>
</dbReference>
<dbReference type="PANTHER" id="PTHR46495:SF2">
    <property type="entry name" value="DUAL SPECIFICITY PROTEIN PHOSPHATASE 18"/>
    <property type="match status" value="1"/>
</dbReference>
<dbReference type="PANTHER" id="PTHR46495">
    <property type="entry name" value="DUAL SPECIFICITY PROTEIN PHOSPHATASE 21"/>
    <property type="match status" value="1"/>
</dbReference>
<dbReference type="Pfam" id="PF00782">
    <property type="entry name" value="DSPc"/>
    <property type="match status" value="1"/>
</dbReference>
<dbReference type="PRINTS" id="PR01908">
    <property type="entry name" value="ADSPHPHTASE"/>
</dbReference>
<dbReference type="PRINTS" id="PR01910">
    <property type="entry name" value="ADSPHPHTASEB"/>
</dbReference>
<dbReference type="SMART" id="SM00195">
    <property type="entry name" value="DSPc"/>
    <property type="match status" value="1"/>
</dbReference>
<dbReference type="SUPFAM" id="SSF52799">
    <property type="entry name" value="(Phosphotyrosine protein) phosphatases II"/>
    <property type="match status" value="1"/>
</dbReference>
<dbReference type="PROSITE" id="PS00383">
    <property type="entry name" value="TYR_PHOSPHATASE_1"/>
    <property type="match status" value="1"/>
</dbReference>
<dbReference type="PROSITE" id="PS50056">
    <property type="entry name" value="TYR_PHOSPHATASE_2"/>
    <property type="match status" value="1"/>
</dbReference>
<dbReference type="PROSITE" id="PS50054">
    <property type="entry name" value="TYR_PHOSPHATASE_DUAL"/>
    <property type="match status" value="1"/>
</dbReference>
<sequence length="188" mass="21066">MTAPSCAFPVQFRQPSVSGLSQITKSLYISNGVAANNKLMLSSNQITMVINVSVEVVNTLYEDIQYMQVPVADSPNSRLCDFFDPIADHIHSVEMKQGRTLLHCAAGVSRSAALCLAYLMKYHAMSLLDAHTWTKSCRPIIRPNSGFWEQLIHYEFQLFGKNTVHMVSSPVGMIPDIYEKEVRLMIPL</sequence>
<organism>
    <name type="scientific">Homo sapiens</name>
    <name type="common">Human</name>
    <dbReference type="NCBI Taxonomy" id="9606"/>
    <lineage>
        <taxon>Eukaryota</taxon>
        <taxon>Metazoa</taxon>
        <taxon>Chordata</taxon>
        <taxon>Craniata</taxon>
        <taxon>Vertebrata</taxon>
        <taxon>Euteleostomi</taxon>
        <taxon>Mammalia</taxon>
        <taxon>Eutheria</taxon>
        <taxon>Euarchontoglires</taxon>
        <taxon>Primates</taxon>
        <taxon>Haplorrhini</taxon>
        <taxon>Catarrhini</taxon>
        <taxon>Hominidae</taxon>
        <taxon>Homo</taxon>
    </lineage>
</organism>
<comment type="function">
    <text evidence="4 5">Can dephosphorylate single and diphosphorylated synthetic MAPK peptides, with preference for the phosphotyrosine and diphosphorylated forms over phosphothreonine. In vitro, dephosphorylates p-nitrophenyl phosphate (pNPP).</text>
</comment>
<comment type="catalytic activity">
    <reaction evidence="3 4 5">
        <text>O-phospho-L-tyrosyl-[protein] + H2O = L-tyrosyl-[protein] + phosphate</text>
        <dbReference type="Rhea" id="RHEA:10684"/>
        <dbReference type="Rhea" id="RHEA-COMP:10136"/>
        <dbReference type="Rhea" id="RHEA-COMP:20101"/>
        <dbReference type="ChEBI" id="CHEBI:15377"/>
        <dbReference type="ChEBI" id="CHEBI:43474"/>
        <dbReference type="ChEBI" id="CHEBI:46858"/>
        <dbReference type="ChEBI" id="CHEBI:61978"/>
        <dbReference type="EC" id="3.1.3.48"/>
    </reaction>
</comment>
<comment type="catalytic activity">
    <reaction evidence="4 5">
        <text>O-phospho-L-seryl-[protein] + H2O = L-seryl-[protein] + phosphate</text>
        <dbReference type="Rhea" id="RHEA:20629"/>
        <dbReference type="Rhea" id="RHEA-COMP:9863"/>
        <dbReference type="Rhea" id="RHEA-COMP:11604"/>
        <dbReference type="ChEBI" id="CHEBI:15377"/>
        <dbReference type="ChEBI" id="CHEBI:29999"/>
        <dbReference type="ChEBI" id="CHEBI:43474"/>
        <dbReference type="ChEBI" id="CHEBI:83421"/>
        <dbReference type="EC" id="3.1.3.16"/>
    </reaction>
</comment>
<comment type="catalytic activity">
    <reaction evidence="4 5">
        <text>O-phospho-L-threonyl-[protein] + H2O = L-threonyl-[protein] + phosphate</text>
        <dbReference type="Rhea" id="RHEA:47004"/>
        <dbReference type="Rhea" id="RHEA-COMP:11060"/>
        <dbReference type="Rhea" id="RHEA-COMP:11605"/>
        <dbReference type="ChEBI" id="CHEBI:15377"/>
        <dbReference type="ChEBI" id="CHEBI:30013"/>
        <dbReference type="ChEBI" id="CHEBI:43474"/>
        <dbReference type="ChEBI" id="CHEBI:61977"/>
        <dbReference type="EC" id="3.1.3.16"/>
    </reaction>
</comment>
<comment type="activity regulation">
    <text evidence="5">Activated by manganese ions, inhibited by iodoacetic acid.</text>
</comment>
<comment type="biophysicochemical properties">
    <phDependence>
        <text evidence="5">Optimum pH is 6.0.</text>
    </phDependence>
    <temperatureDependence>
        <text evidence="5">Optimum temperature is 55 degrees Celsius.</text>
    </temperatureDependence>
</comment>
<comment type="interaction">
    <interactant intactId="EBI-10698945">
        <id>Q8NEJ0</id>
    </interactant>
    <interactant intactId="EBI-475899">
        <id>P06213</id>
        <label>INSR</label>
    </interactant>
    <organismsDiffer>false</organismsDiffer>
    <experiments>2</experiments>
</comment>
<comment type="interaction">
    <interactant intactId="EBI-10698945">
        <id>Q8NEJ0</id>
    </interactant>
    <interactant intactId="EBI-1055254">
        <id>Q8WXH2</id>
        <label>JPH3</label>
    </interactant>
    <organismsDiffer>false</organismsDiffer>
    <experiments>3</experiments>
</comment>
<comment type="subcellular location">
    <subcellularLocation>
        <location evidence="4">Cytoplasm</location>
    </subcellularLocation>
    <subcellularLocation>
        <location evidence="4">Nucleus</location>
    </subcellularLocation>
    <subcellularLocation>
        <location evidence="1">Mitochondrion inner membrane</location>
        <topology evidence="1">Peripheral membrane protein</topology>
        <orientation evidence="1">Intermembrane side</orientation>
    </subcellularLocation>
    <text evidence="1">Translocates to cytoplasm in response to apoptotic stimuli such as staurosporine treatment.</text>
</comment>
<comment type="tissue specificity">
    <text evidence="4 5">Widely expressed with highest levels in liver, brain, ovary and testis.</text>
</comment>
<comment type="similarity">
    <text evidence="7">Belongs to the protein-tyrosine phosphatase family. Non-receptor class dual specificity subfamily.</text>
</comment>
<accession>Q8NEJ0</accession>
<accession>B3KPA4</accession>